<accession>O59838</accession>
<accession>Q9UU58</accession>
<organism>
    <name type="scientific">Schizosaccharomyces pombe (strain 972 / ATCC 24843)</name>
    <name type="common">Fission yeast</name>
    <dbReference type="NCBI Taxonomy" id="284812"/>
    <lineage>
        <taxon>Eukaryota</taxon>
        <taxon>Fungi</taxon>
        <taxon>Dikarya</taxon>
        <taxon>Ascomycota</taxon>
        <taxon>Taphrinomycotina</taxon>
        <taxon>Schizosaccharomycetes</taxon>
        <taxon>Schizosaccharomycetales</taxon>
        <taxon>Schizosaccharomycetaceae</taxon>
        <taxon>Schizosaccharomyces</taxon>
    </lineage>
</organism>
<sequence>MSSRTNVVGIDFGNSKTVIAVARNRAIDVIVNEVSNRSTPSLVSYGERSRFLGEAAKSAEASNFRNTVGSLKRLAGRTYDDPEIKDIESNFISAKLTEVDGFVGAKVQYLNEETAFSNIQLIAAYFTKIKAIAEAELIGSVSDVVISIPAWFTDIQRRALLEAANIAGLNPLRLMNDNAAAALTYGITKTDLPEPESPRRVAIVDFGHSNYSVSIVEFSRGQFHIKSTVCDRNLGSRNMDKALIDYFAAEFKEKYKIDVLSNPKATFRLATAVERLKKVLSANANAPLNVEMIMNDIDASSFIKRSDFEELIKPLLERLTPPIEKALELAGIKKEDLYSIEMVGGCTRVPIVKEVIANYFGKGLSFTLNQDEAVARGCALSCAILSPVFRVREFHVHDVTTYPITFSWEPIPENPEEDSSLEVFSEGNPIPSTKILTFYRKAPFKLLAAYSKEAQLPGSIKQNIAQYLINDVVPNKDGDLSIVKIKVRLDLHGILVVEQAYIVEEQEVEEPVETSPEEEAEKKTDEPVKMRKVKKLVKVADLSVSVQEDRLPTEVLEKYREAEHQMIATDKLVAETVDRKNALEEYIYDTRAKLDDIYAPFTNEEESSKFKEMLTKAEDWLYEEGEDTTKAVYTAKLEDLMRVGGPIRQRYLDAEEAKRQKVQAEREAAKAATKSEAEKQKPSGKFEEGTGGRAPPPPPAEEVAPENEEVETMEIDEQKE</sequence>
<gene>
    <name type="primary">pss1</name>
    <name type="synonym">ssp1</name>
    <name type="ORF">SPAC110.04c</name>
    <name type="ORF">SPAP14E8.01c</name>
</gene>
<feature type="chain" id="PRO_0000078382" description="Heat shock protein homolog pss1">
    <location>
        <begin position="1"/>
        <end position="720"/>
    </location>
</feature>
<feature type="region of interest" description="Disordered" evidence="1">
    <location>
        <begin position="658"/>
        <end position="720"/>
    </location>
</feature>
<feature type="compositionally biased region" description="Basic and acidic residues" evidence="1">
    <location>
        <begin position="658"/>
        <end position="690"/>
    </location>
</feature>
<feature type="compositionally biased region" description="Acidic residues" evidence="1">
    <location>
        <begin position="703"/>
        <end position="720"/>
    </location>
</feature>
<feature type="modified residue" description="Phosphoserine" evidence="3">
    <location>
        <position position="38"/>
    </location>
</feature>
<feature type="modified residue" description="Phosphothreonine" evidence="3">
    <location>
        <position position="39"/>
    </location>
</feature>
<feature type="sequence conflict" description="In Ref. 1; AAC18441." evidence="5" ref="1">
    <original>V</original>
    <variation>E</variation>
    <location>
        <position position="573"/>
    </location>
</feature>
<proteinExistence type="evidence at protein level"/>
<keyword id="KW-0067">ATP-binding</keyword>
<keyword id="KW-0963">Cytoplasm</keyword>
<keyword id="KW-0547">Nucleotide-binding</keyword>
<keyword id="KW-0597">Phosphoprotein</keyword>
<keyword id="KW-1185">Reference proteome</keyword>
<keyword id="KW-0346">Stress response</keyword>
<dbReference type="EMBL" id="U59434">
    <property type="protein sequence ID" value="AAC18441.1"/>
    <property type="molecule type" value="mRNA"/>
</dbReference>
<dbReference type="EMBL" id="CU329670">
    <property type="protein sequence ID" value="CAC08562.2"/>
    <property type="molecule type" value="Genomic_DNA"/>
</dbReference>
<dbReference type="EMBL" id="AB027800">
    <property type="protein sequence ID" value="BAA87104.1"/>
    <property type="molecule type" value="Genomic_DNA"/>
</dbReference>
<dbReference type="PIR" id="JC6562">
    <property type="entry name" value="JC6562"/>
</dbReference>
<dbReference type="RefSeq" id="XP_001713060.1">
    <property type="nucleotide sequence ID" value="XM_001713008.2"/>
</dbReference>
<dbReference type="SMR" id="O59838"/>
<dbReference type="BioGRID" id="280590">
    <property type="interactions" value="10"/>
</dbReference>
<dbReference type="FunCoup" id="O59838">
    <property type="interactions" value="813"/>
</dbReference>
<dbReference type="IntAct" id="O59838">
    <property type="interactions" value="1"/>
</dbReference>
<dbReference type="STRING" id="284812.O59838"/>
<dbReference type="iPTMnet" id="O59838"/>
<dbReference type="PaxDb" id="4896-SPAC110.04c.1"/>
<dbReference type="EnsemblFungi" id="SPAC110.04c.1">
    <property type="protein sequence ID" value="SPAC110.04c.1:pep"/>
    <property type="gene ID" value="SPAC110.04c"/>
</dbReference>
<dbReference type="PomBase" id="SPAC110.04c">
    <property type="gene designation" value="pss1"/>
</dbReference>
<dbReference type="VEuPathDB" id="FungiDB:SPAC110.04c"/>
<dbReference type="eggNOG" id="KOG0103">
    <property type="taxonomic scope" value="Eukaryota"/>
</dbReference>
<dbReference type="HOGENOM" id="CLU_005965_5_1_1"/>
<dbReference type="InParanoid" id="O59838"/>
<dbReference type="OMA" id="WEQSPEI"/>
<dbReference type="PhylomeDB" id="O59838"/>
<dbReference type="Reactome" id="R-SPO-3371453">
    <property type="pathway name" value="Regulation of HSF1-mediated heat shock response"/>
</dbReference>
<dbReference type="PRO" id="PR:O59838"/>
<dbReference type="Proteomes" id="UP000002485">
    <property type="component" value="Chromosome I"/>
</dbReference>
<dbReference type="GO" id="GO:0005829">
    <property type="term" value="C:cytosol"/>
    <property type="evidence" value="ECO:0007005"/>
    <property type="project" value="PomBase"/>
</dbReference>
<dbReference type="GO" id="GO:0005634">
    <property type="term" value="C:nucleus"/>
    <property type="evidence" value="ECO:0007005"/>
    <property type="project" value="PomBase"/>
</dbReference>
<dbReference type="GO" id="GO:0000774">
    <property type="term" value="F:adenyl-nucleotide exchange factor activity"/>
    <property type="evidence" value="ECO:0000318"/>
    <property type="project" value="GO_Central"/>
</dbReference>
<dbReference type="GO" id="GO:0005524">
    <property type="term" value="F:ATP binding"/>
    <property type="evidence" value="ECO:0007669"/>
    <property type="project" value="UniProtKB-KW"/>
</dbReference>
<dbReference type="GO" id="GO:0016887">
    <property type="term" value="F:ATP hydrolysis activity"/>
    <property type="evidence" value="ECO:0000305"/>
    <property type="project" value="PomBase"/>
</dbReference>
<dbReference type="GO" id="GO:0140662">
    <property type="term" value="F:ATP-dependent protein folding chaperone"/>
    <property type="evidence" value="ECO:0007669"/>
    <property type="project" value="InterPro"/>
</dbReference>
<dbReference type="GO" id="GO:0006457">
    <property type="term" value="P:protein folding"/>
    <property type="evidence" value="ECO:0000318"/>
    <property type="project" value="GO_Central"/>
</dbReference>
<dbReference type="GO" id="GO:0042026">
    <property type="term" value="P:protein refolding"/>
    <property type="evidence" value="ECO:0000266"/>
    <property type="project" value="PomBase"/>
</dbReference>
<dbReference type="CDD" id="cd24094">
    <property type="entry name" value="ASKHA_NBD_HSP70_ScSse"/>
    <property type="match status" value="1"/>
</dbReference>
<dbReference type="FunFam" id="1.20.1270.10:FF:000002">
    <property type="entry name" value="Heat shock 70 kDa protein 4"/>
    <property type="match status" value="1"/>
</dbReference>
<dbReference type="FunFam" id="3.30.30.30:FF:000002">
    <property type="entry name" value="Heat shock 70 kDa protein 4"/>
    <property type="match status" value="1"/>
</dbReference>
<dbReference type="FunFam" id="3.90.640.10:FF:000004">
    <property type="entry name" value="Heat shock 70 kDa protein 4"/>
    <property type="match status" value="1"/>
</dbReference>
<dbReference type="FunFam" id="2.60.34.10:FF:000011">
    <property type="entry name" value="Heat shock protein hsp88"/>
    <property type="match status" value="1"/>
</dbReference>
<dbReference type="Gene3D" id="1.20.1270.10">
    <property type="match status" value="1"/>
</dbReference>
<dbReference type="Gene3D" id="3.30.30.30">
    <property type="match status" value="1"/>
</dbReference>
<dbReference type="Gene3D" id="3.30.420.40">
    <property type="match status" value="2"/>
</dbReference>
<dbReference type="Gene3D" id="3.90.640.10">
    <property type="entry name" value="Actin, Chain A, domain 4"/>
    <property type="match status" value="1"/>
</dbReference>
<dbReference type="Gene3D" id="2.60.34.10">
    <property type="entry name" value="Substrate Binding Domain Of DNAk, Chain A, domain 1"/>
    <property type="match status" value="1"/>
</dbReference>
<dbReference type="InterPro" id="IPR043129">
    <property type="entry name" value="ATPase_NBD"/>
</dbReference>
<dbReference type="InterPro" id="IPR018181">
    <property type="entry name" value="Heat_shock_70_CS"/>
</dbReference>
<dbReference type="InterPro" id="IPR029048">
    <property type="entry name" value="HSP70_C_sf"/>
</dbReference>
<dbReference type="InterPro" id="IPR029047">
    <property type="entry name" value="HSP70_peptide-bd_sf"/>
</dbReference>
<dbReference type="InterPro" id="IPR013126">
    <property type="entry name" value="Hsp_70_fam"/>
</dbReference>
<dbReference type="PANTHER" id="PTHR45639:SF4">
    <property type="entry name" value="HSC70CB, ISOFORM G"/>
    <property type="match status" value="1"/>
</dbReference>
<dbReference type="PANTHER" id="PTHR45639">
    <property type="entry name" value="HSC70CB, ISOFORM G-RELATED"/>
    <property type="match status" value="1"/>
</dbReference>
<dbReference type="Pfam" id="PF00012">
    <property type="entry name" value="HSP70"/>
    <property type="match status" value="1"/>
</dbReference>
<dbReference type="PRINTS" id="PR00301">
    <property type="entry name" value="HEATSHOCK70"/>
</dbReference>
<dbReference type="SUPFAM" id="SSF53067">
    <property type="entry name" value="Actin-like ATPase domain"/>
    <property type="match status" value="2"/>
</dbReference>
<dbReference type="SUPFAM" id="SSF100934">
    <property type="entry name" value="Heat shock protein 70kD (HSP70), C-terminal subdomain"/>
    <property type="match status" value="1"/>
</dbReference>
<dbReference type="SUPFAM" id="SSF100920">
    <property type="entry name" value="Heat shock protein 70kD (HSP70), peptide-binding domain"/>
    <property type="match status" value="1"/>
</dbReference>
<dbReference type="PROSITE" id="PS01036">
    <property type="entry name" value="HSP70_3"/>
    <property type="match status" value="1"/>
</dbReference>
<comment type="function">
    <text evidence="4">Required for normal growth at various temperatures.</text>
</comment>
<comment type="subcellular location">
    <subcellularLocation>
        <location evidence="2">Cytoplasm</location>
    </subcellularLocation>
</comment>
<comment type="induction">
    <text evidence="4">Increases a few-fold upon upshift to 42 degrees Celsius.</text>
</comment>
<comment type="similarity">
    <text evidence="5">Belongs to the heat shock protein 70 family.</text>
</comment>
<name>HSP7F_SCHPO</name>
<evidence type="ECO:0000256" key="1">
    <source>
        <dbReference type="SAM" id="MobiDB-lite"/>
    </source>
</evidence>
<evidence type="ECO:0000269" key="2">
    <source>
    </source>
</evidence>
<evidence type="ECO:0000269" key="3">
    <source>
    </source>
</evidence>
<evidence type="ECO:0000269" key="4">
    <source>
    </source>
</evidence>
<evidence type="ECO:0000305" key="5"/>
<reference key="1">
    <citation type="journal article" date="1998" name="Gene">
        <title>Isolation of a novel heat shock protein 70-like gene, pss1+ of Schizosaccharomyces pombe homologous to hsp110/SSE subfamily.</title>
        <authorList>
            <person name="Chung K.-S."/>
            <person name="Hoe K.-L."/>
            <person name="Kim K.-W."/>
            <person name="Yoo H.-S."/>
        </authorList>
    </citation>
    <scope>NUCLEOTIDE SEQUENCE [MRNA]</scope>
    <scope>FUNCTION</scope>
    <scope>INDUCTION</scope>
</reference>
<reference key="2">
    <citation type="journal article" date="2002" name="Nature">
        <title>The genome sequence of Schizosaccharomyces pombe.</title>
        <authorList>
            <person name="Wood V."/>
            <person name="Gwilliam R."/>
            <person name="Rajandream M.A."/>
            <person name="Lyne M.H."/>
            <person name="Lyne R."/>
            <person name="Stewart A."/>
            <person name="Sgouros J.G."/>
            <person name="Peat N."/>
            <person name="Hayles J."/>
            <person name="Baker S.G."/>
            <person name="Basham D."/>
            <person name="Bowman S."/>
            <person name="Brooks K."/>
            <person name="Brown D."/>
            <person name="Brown S."/>
            <person name="Chillingworth T."/>
            <person name="Churcher C.M."/>
            <person name="Collins M."/>
            <person name="Connor R."/>
            <person name="Cronin A."/>
            <person name="Davis P."/>
            <person name="Feltwell T."/>
            <person name="Fraser A."/>
            <person name="Gentles S."/>
            <person name="Goble A."/>
            <person name="Hamlin N."/>
            <person name="Harris D.E."/>
            <person name="Hidalgo J."/>
            <person name="Hodgson G."/>
            <person name="Holroyd S."/>
            <person name="Hornsby T."/>
            <person name="Howarth S."/>
            <person name="Huckle E.J."/>
            <person name="Hunt S."/>
            <person name="Jagels K."/>
            <person name="James K.D."/>
            <person name="Jones L."/>
            <person name="Jones M."/>
            <person name="Leather S."/>
            <person name="McDonald S."/>
            <person name="McLean J."/>
            <person name="Mooney P."/>
            <person name="Moule S."/>
            <person name="Mungall K.L."/>
            <person name="Murphy L.D."/>
            <person name="Niblett D."/>
            <person name="Odell C."/>
            <person name="Oliver K."/>
            <person name="O'Neil S."/>
            <person name="Pearson D."/>
            <person name="Quail M.A."/>
            <person name="Rabbinowitsch E."/>
            <person name="Rutherford K.M."/>
            <person name="Rutter S."/>
            <person name="Saunders D."/>
            <person name="Seeger K."/>
            <person name="Sharp S."/>
            <person name="Skelton J."/>
            <person name="Simmonds M.N."/>
            <person name="Squares R."/>
            <person name="Squares S."/>
            <person name="Stevens K."/>
            <person name="Taylor K."/>
            <person name="Taylor R.G."/>
            <person name="Tivey A."/>
            <person name="Walsh S.V."/>
            <person name="Warren T."/>
            <person name="Whitehead S."/>
            <person name="Woodward J.R."/>
            <person name="Volckaert G."/>
            <person name="Aert R."/>
            <person name="Robben J."/>
            <person name="Grymonprez B."/>
            <person name="Weltjens I."/>
            <person name="Vanstreels E."/>
            <person name="Rieger M."/>
            <person name="Schaefer M."/>
            <person name="Mueller-Auer S."/>
            <person name="Gabel C."/>
            <person name="Fuchs M."/>
            <person name="Duesterhoeft A."/>
            <person name="Fritzc C."/>
            <person name="Holzer E."/>
            <person name="Moestl D."/>
            <person name="Hilbert H."/>
            <person name="Borzym K."/>
            <person name="Langer I."/>
            <person name="Beck A."/>
            <person name="Lehrach H."/>
            <person name="Reinhardt R."/>
            <person name="Pohl T.M."/>
            <person name="Eger P."/>
            <person name="Zimmermann W."/>
            <person name="Wedler H."/>
            <person name="Wambutt R."/>
            <person name="Purnelle B."/>
            <person name="Goffeau A."/>
            <person name="Cadieu E."/>
            <person name="Dreano S."/>
            <person name="Gloux S."/>
            <person name="Lelaure V."/>
            <person name="Mottier S."/>
            <person name="Galibert F."/>
            <person name="Aves S.J."/>
            <person name="Xiang Z."/>
            <person name="Hunt C."/>
            <person name="Moore K."/>
            <person name="Hurst S.M."/>
            <person name="Lucas M."/>
            <person name="Rochet M."/>
            <person name="Gaillardin C."/>
            <person name="Tallada V.A."/>
            <person name="Garzon A."/>
            <person name="Thode G."/>
            <person name="Daga R.R."/>
            <person name="Cruzado L."/>
            <person name="Jimenez J."/>
            <person name="Sanchez M."/>
            <person name="del Rey F."/>
            <person name="Benito J."/>
            <person name="Dominguez A."/>
            <person name="Revuelta J.L."/>
            <person name="Moreno S."/>
            <person name="Armstrong J."/>
            <person name="Forsburg S.L."/>
            <person name="Cerutti L."/>
            <person name="Lowe T."/>
            <person name="McCombie W.R."/>
            <person name="Paulsen I."/>
            <person name="Potashkin J."/>
            <person name="Shpakovski G.V."/>
            <person name="Ussery D."/>
            <person name="Barrell B.G."/>
            <person name="Nurse P."/>
        </authorList>
    </citation>
    <scope>NUCLEOTIDE SEQUENCE [LARGE SCALE GENOMIC DNA]</scope>
    <source>
        <strain>972 / ATCC 24843</strain>
    </source>
</reference>
<reference key="3">
    <citation type="journal article" date="2000" name="Genes Cells">
        <title>Large-scale screening of intracellular protein localization in living fission yeast cells by the use of a GFP-fusion genomic DNA library.</title>
        <authorList>
            <person name="Ding D.-Q."/>
            <person name="Tomita Y."/>
            <person name="Yamamoto A."/>
            <person name="Chikashige Y."/>
            <person name="Haraguchi T."/>
            <person name="Hiraoka Y."/>
        </authorList>
    </citation>
    <scope>NUCLEOTIDE SEQUENCE [LARGE SCALE GENOMIC DNA] OF 129-306</scope>
    <scope>SUBCELLULAR LOCATION</scope>
    <source>
        <strain>ATCC 38364 / 968</strain>
    </source>
</reference>
<reference key="4">
    <citation type="journal article" date="2008" name="J. Proteome Res.">
        <title>Phosphoproteome analysis of fission yeast.</title>
        <authorList>
            <person name="Wilson-Grady J.T."/>
            <person name="Villen J."/>
            <person name="Gygi S.P."/>
        </authorList>
    </citation>
    <scope>PHOSPHORYLATION [LARGE SCALE ANALYSIS] AT SER-38 AND THR-39</scope>
    <scope>IDENTIFICATION BY MASS SPECTROMETRY</scope>
</reference>
<protein>
    <recommendedName>
        <fullName>Heat shock protein homolog pss1</fullName>
    </recommendedName>
</protein>